<organism>
    <name type="scientific">Bradyrhizobium sp. (strain BTAi1 / ATCC BAA-1182)</name>
    <dbReference type="NCBI Taxonomy" id="288000"/>
    <lineage>
        <taxon>Bacteria</taxon>
        <taxon>Pseudomonadati</taxon>
        <taxon>Pseudomonadota</taxon>
        <taxon>Alphaproteobacteria</taxon>
        <taxon>Hyphomicrobiales</taxon>
        <taxon>Nitrobacteraceae</taxon>
        <taxon>Bradyrhizobium</taxon>
    </lineage>
</organism>
<dbReference type="EMBL" id="CP000494">
    <property type="protein sequence ID" value="ABQ38795.1"/>
    <property type="molecule type" value="Genomic_DNA"/>
</dbReference>
<dbReference type="RefSeq" id="WP_012046729.1">
    <property type="nucleotide sequence ID" value="NC_009485.1"/>
</dbReference>
<dbReference type="SMR" id="A5ERK1"/>
<dbReference type="STRING" id="288000.BBta_6908"/>
<dbReference type="KEGG" id="bbt:BBta_6908"/>
<dbReference type="eggNOG" id="COG0632">
    <property type="taxonomic scope" value="Bacteria"/>
</dbReference>
<dbReference type="HOGENOM" id="CLU_087936_3_0_5"/>
<dbReference type="OrthoDB" id="5293449at2"/>
<dbReference type="Proteomes" id="UP000000246">
    <property type="component" value="Chromosome"/>
</dbReference>
<dbReference type="GO" id="GO:0005737">
    <property type="term" value="C:cytoplasm"/>
    <property type="evidence" value="ECO:0007669"/>
    <property type="project" value="UniProtKB-SubCell"/>
</dbReference>
<dbReference type="GO" id="GO:0009379">
    <property type="term" value="C:Holliday junction helicase complex"/>
    <property type="evidence" value="ECO:0007669"/>
    <property type="project" value="InterPro"/>
</dbReference>
<dbReference type="GO" id="GO:0048476">
    <property type="term" value="C:Holliday junction resolvase complex"/>
    <property type="evidence" value="ECO:0007669"/>
    <property type="project" value="UniProtKB-UniRule"/>
</dbReference>
<dbReference type="GO" id="GO:0005524">
    <property type="term" value="F:ATP binding"/>
    <property type="evidence" value="ECO:0007669"/>
    <property type="project" value="InterPro"/>
</dbReference>
<dbReference type="GO" id="GO:0000400">
    <property type="term" value="F:four-way junction DNA binding"/>
    <property type="evidence" value="ECO:0007669"/>
    <property type="project" value="UniProtKB-UniRule"/>
</dbReference>
<dbReference type="GO" id="GO:0009378">
    <property type="term" value="F:four-way junction helicase activity"/>
    <property type="evidence" value="ECO:0007669"/>
    <property type="project" value="InterPro"/>
</dbReference>
<dbReference type="GO" id="GO:0006310">
    <property type="term" value="P:DNA recombination"/>
    <property type="evidence" value="ECO:0007669"/>
    <property type="project" value="UniProtKB-UniRule"/>
</dbReference>
<dbReference type="GO" id="GO:0006281">
    <property type="term" value="P:DNA repair"/>
    <property type="evidence" value="ECO:0007669"/>
    <property type="project" value="UniProtKB-UniRule"/>
</dbReference>
<dbReference type="Gene3D" id="1.10.150.20">
    <property type="entry name" value="5' to 3' exonuclease, C-terminal subdomain"/>
    <property type="match status" value="1"/>
</dbReference>
<dbReference type="Gene3D" id="1.10.8.10">
    <property type="entry name" value="DNA helicase RuvA subunit, C-terminal domain"/>
    <property type="match status" value="1"/>
</dbReference>
<dbReference type="Gene3D" id="2.40.50.140">
    <property type="entry name" value="Nucleic acid-binding proteins"/>
    <property type="match status" value="1"/>
</dbReference>
<dbReference type="HAMAP" id="MF_00031">
    <property type="entry name" value="DNA_HJ_migration_RuvA"/>
    <property type="match status" value="1"/>
</dbReference>
<dbReference type="InterPro" id="IPR013849">
    <property type="entry name" value="DNA_helicase_Holl-junc_RuvA_I"/>
</dbReference>
<dbReference type="InterPro" id="IPR003583">
    <property type="entry name" value="Hlx-hairpin-Hlx_DNA-bd_motif"/>
</dbReference>
<dbReference type="InterPro" id="IPR012340">
    <property type="entry name" value="NA-bd_OB-fold"/>
</dbReference>
<dbReference type="InterPro" id="IPR000085">
    <property type="entry name" value="RuvA"/>
</dbReference>
<dbReference type="InterPro" id="IPR010994">
    <property type="entry name" value="RuvA_2-like"/>
</dbReference>
<dbReference type="InterPro" id="IPR011114">
    <property type="entry name" value="RuvA_C"/>
</dbReference>
<dbReference type="InterPro" id="IPR036267">
    <property type="entry name" value="RuvA_C_sf"/>
</dbReference>
<dbReference type="NCBIfam" id="TIGR00084">
    <property type="entry name" value="ruvA"/>
    <property type="match status" value="1"/>
</dbReference>
<dbReference type="Pfam" id="PF14520">
    <property type="entry name" value="HHH_5"/>
    <property type="match status" value="1"/>
</dbReference>
<dbReference type="Pfam" id="PF07499">
    <property type="entry name" value="RuvA_C"/>
    <property type="match status" value="1"/>
</dbReference>
<dbReference type="Pfam" id="PF01330">
    <property type="entry name" value="RuvA_N"/>
    <property type="match status" value="1"/>
</dbReference>
<dbReference type="SMART" id="SM00278">
    <property type="entry name" value="HhH1"/>
    <property type="match status" value="2"/>
</dbReference>
<dbReference type="SUPFAM" id="SSF46929">
    <property type="entry name" value="DNA helicase RuvA subunit, C-terminal domain"/>
    <property type="match status" value="1"/>
</dbReference>
<dbReference type="SUPFAM" id="SSF50249">
    <property type="entry name" value="Nucleic acid-binding proteins"/>
    <property type="match status" value="1"/>
</dbReference>
<dbReference type="SUPFAM" id="SSF47781">
    <property type="entry name" value="RuvA domain 2-like"/>
    <property type="match status" value="1"/>
</dbReference>
<accession>A5ERK1</accession>
<evidence type="ECO:0000255" key="1">
    <source>
        <dbReference type="HAMAP-Rule" id="MF_00031"/>
    </source>
</evidence>
<sequence length="205" mass="21453">MIGKLKGLIDSYAEDFVILDVGGVGYQVHCSARTLQALPSPGEAATLSIETYVREDQIKLFGFRSDVEREWFRLLQTVQGVGAKVALAVLGTLPPADLANAIALRDKAAVARTPGVGPKVAERIVTELKDKAPAFADVDPGVIRLSGAIEDSRAPQPIADAISALINLGYGQPQAAAAIAAASRAAGDKAETAQLIRLGLKELAK</sequence>
<reference key="1">
    <citation type="journal article" date="2007" name="Science">
        <title>Legumes symbioses: absence of nod genes in photosynthetic bradyrhizobia.</title>
        <authorList>
            <person name="Giraud E."/>
            <person name="Moulin L."/>
            <person name="Vallenet D."/>
            <person name="Barbe V."/>
            <person name="Cytryn E."/>
            <person name="Avarre J.-C."/>
            <person name="Jaubert M."/>
            <person name="Simon D."/>
            <person name="Cartieaux F."/>
            <person name="Prin Y."/>
            <person name="Bena G."/>
            <person name="Hannibal L."/>
            <person name="Fardoux J."/>
            <person name="Kojadinovic M."/>
            <person name="Vuillet L."/>
            <person name="Lajus A."/>
            <person name="Cruveiller S."/>
            <person name="Rouy Z."/>
            <person name="Mangenot S."/>
            <person name="Segurens B."/>
            <person name="Dossat C."/>
            <person name="Franck W.L."/>
            <person name="Chang W.-S."/>
            <person name="Saunders E."/>
            <person name="Bruce D."/>
            <person name="Richardson P."/>
            <person name="Normand P."/>
            <person name="Dreyfus B."/>
            <person name="Pignol D."/>
            <person name="Stacey G."/>
            <person name="Emerich D."/>
            <person name="Vermeglio A."/>
            <person name="Medigue C."/>
            <person name="Sadowsky M."/>
        </authorList>
    </citation>
    <scope>NUCLEOTIDE SEQUENCE [LARGE SCALE GENOMIC DNA]</scope>
    <source>
        <strain>BTAi1 / ATCC BAA-1182</strain>
    </source>
</reference>
<proteinExistence type="inferred from homology"/>
<keyword id="KW-0963">Cytoplasm</keyword>
<keyword id="KW-0227">DNA damage</keyword>
<keyword id="KW-0233">DNA recombination</keyword>
<keyword id="KW-0234">DNA repair</keyword>
<keyword id="KW-0238">DNA-binding</keyword>
<keyword id="KW-1185">Reference proteome</keyword>
<gene>
    <name evidence="1" type="primary">ruvA</name>
    <name type="ordered locus">BBta_6908</name>
</gene>
<comment type="function">
    <text evidence="1">The RuvA-RuvB-RuvC complex processes Holliday junction (HJ) DNA during genetic recombination and DNA repair, while the RuvA-RuvB complex plays an important role in the rescue of blocked DNA replication forks via replication fork reversal (RFR). RuvA specifically binds to HJ cruciform DNA, conferring on it an open structure. The RuvB hexamer acts as an ATP-dependent pump, pulling dsDNA into and through the RuvAB complex. HJ branch migration allows RuvC to scan DNA until it finds its consensus sequence, where it cleaves and resolves the cruciform DNA.</text>
</comment>
<comment type="subunit">
    <text evidence="1">Homotetramer. Forms an RuvA(8)-RuvB(12)-Holliday junction (HJ) complex. HJ DNA is sandwiched between 2 RuvA tetramers; dsDNA enters through RuvA and exits via RuvB. An RuvB hexamer assembles on each DNA strand where it exits the tetramer. Each RuvB hexamer is contacted by two RuvA subunits (via domain III) on 2 adjacent RuvB subunits; this complex drives branch migration. In the full resolvosome a probable DNA-RuvA(4)-RuvB(12)-RuvC(2) complex forms which resolves the HJ.</text>
</comment>
<comment type="subcellular location">
    <subcellularLocation>
        <location evidence="1">Cytoplasm</location>
    </subcellularLocation>
</comment>
<comment type="domain">
    <text evidence="1">Has three domains with a flexible linker between the domains II and III and assumes an 'L' shape. Domain III is highly mobile and contacts RuvB.</text>
</comment>
<comment type="similarity">
    <text evidence="1">Belongs to the RuvA family.</text>
</comment>
<protein>
    <recommendedName>
        <fullName evidence="1">Holliday junction branch migration complex subunit RuvA</fullName>
    </recommendedName>
</protein>
<feature type="chain" id="PRO_1000002404" description="Holliday junction branch migration complex subunit RuvA">
    <location>
        <begin position="1"/>
        <end position="205"/>
    </location>
</feature>
<feature type="region of interest" description="Domain I" evidence="1">
    <location>
        <begin position="1"/>
        <end position="64"/>
    </location>
</feature>
<feature type="region of interest" description="Domain II" evidence="1">
    <location>
        <begin position="65"/>
        <end position="143"/>
    </location>
</feature>
<feature type="region of interest" description="Flexible linker" evidence="1">
    <location>
        <begin position="144"/>
        <end position="154"/>
    </location>
</feature>
<feature type="region of interest" description="Domain III" evidence="1">
    <location>
        <begin position="154"/>
        <end position="205"/>
    </location>
</feature>
<name>RUVA_BRASB</name>